<name>SPC24_CANGA</name>
<sequence length="201" mass="23155">MASTEEIVQMMQEASAEFAEADDVSFLDKMNSNIAQLEQQLREQMDESRQNIAKLEINLIDTEKSIGSLRELMKDATDEATIMKGSDKLNNLIDELQATENEIQMMNSEIEKKVSKLVEDEDNTSSEYEMISKELEQEYDPVFASNILKLKLYRSLGVRLDLDNNQILIQNKELGTIDTLPLEDELTEFFKVKYIWSRIGK</sequence>
<protein>
    <recommendedName>
        <fullName>Probable kinetochore protein SPC24</fullName>
    </recommendedName>
</protein>
<proteinExistence type="inferred from homology"/>
<reference key="1">
    <citation type="journal article" date="2004" name="Nature">
        <title>Genome evolution in yeasts.</title>
        <authorList>
            <person name="Dujon B."/>
            <person name="Sherman D."/>
            <person name="Fischer G."/>
            <person name="Durrens P."/>
            <person name="Casaregola S."/>
            <person name="Lafontaine I."/>
            <person name="de Montigny J."/>
            <person name="Marck C."/>
            <person name="Neuveglise C."/>
            <person name="Talla E."/>
            <person name="Goffard N."/>
            <person name="Frangeul L."/>
            <person name="Aigle M."/>
            <person name="Anthouard V."/>
            <person name="Babour A."/>
            <person name="Barbe V."/>
            <person name="Barnay S."/>
            <person name="Blanchin S."/>
            <person name="Beckerich J.-M."/>
            <person name="Beyne E."/>
            <person name="Bleykasten C."/>
            <person name="Boisrame A."/>
            <person name="Boyer J."/>
            <person name="Cattolico L."/>
            <person name="Confanioleri F."/>
            <person name="de Daruvar A."/>
            <person name="Despons L."/>
            <person name="Fabre E."/>
            <person name="Fairhead C."/>
            <person name="Ferry-Dumazet H."/>
            <person name="Groppi A."/>
            <person name="Hantraye F."/>
            <person name="Hennequin C."/>
            <person name="Jauniaux N."/>
            <person name="Joyet P."/>
            <person name="Kachouri R."/>
            <person name="Kerrest A."/>
            <person name="Koszul R."/>
            <person name="Lemaire M."/>
            <person name="Lesur I."/>
            <person name="Ma L."/>
            <person name="Muller H."/>
            <person name="Nicaud J.-M."/>
            <person name="Nikolski M."/>
            <person name="Oztas S."/>
            <person name="Ozier-Kalogeropoulos O."/>
            <person name="Pellenz S."/>
            <person name="Potier S."/>
            <person name="Richard G.-F."/>
            <person name="Straub M.-L."/>
            <person name="Suleau A."/>
            <person name="Swennen D."/>
            <person name="Tekaia F."/>
            <person name="Wesolowski-Louvel M."/>
            <person name="Westhof E."/>
            <person name="Wirth B."/>
            <person name="Zeniou-Meyer M."/>
            <person name="Zivanovic Y."/>
            <person name="Bolotin-Fukuhara M."/>
            <person name="Thierry A."/>
            <person name="Bouchier C."/>
            <person name="Caudron B."/>
            <person name="Scarpelli C."/>
            <person name="Gaillardin C."/>
            <person name="Weissenbach J."/>
            <person name="Wincker P."/>
            <person name="Souciet J.-L."/>
        </authorList>
    </citation>
    <scope>NUCLEOTIDE SEQUENCE [LARGE SCALE GENOMIC DNA]</scope>
    <source>
        <strain>ATCC 2001 / BCRC 20586 / JCM 3761 / NBRC 0622 / NRRL Y-65 / CBS 138</strain>
    </source>
</reference>
<dbReference type="EMBL" id="CR380957">
    <property type="protein sequence ID" value="CAG61343.1"/>
    <property type="molecule type" value="Genomic_DNA"/>
</dbReference>
<dbReference type="RefSeq" id="XP_448382.1">
    <property type="nucleotide sequence ID" value="XM_448382.1"/>
</dbReference>
<dbReference type="SMR" id="Q6FN12"/>
<dbReference type="FunCoup" id="Q6FN12">
    <property type="interactions" value="158"/>
</dbReference>
<dbReference type="STRING" id="284593.Q6FN12"/>
<dbReference type="EnsemblFungi" id="CAGL0K03619g-T">
    <property type="protein sequence ID" value="CAGL0K03619g-T-p1"/>
    <property type="gene ID" value="CAGL0K03619g"/>
</dbReference>
<dbReference type="KEGG" id="cgr:2890132"/>
<dbReference type="CGD" id="CAL0134409">
    <property type="gene designation" value="CAGL0K03619g"/>
</dbReference>
<dbReference type="VEuPathDB" id="FungiDB:CAGL0K03619g"/>
<dbReference type="eggNOG" id="ENOG502S3GS">
    <property type="taxonomic scope" value="Eukaryota"/>
</dbReference>
<dbReference type="HOGENOM" id="CLU_095757_0_0_1"/>
<dbReference type="InParanoid" id="Q6FN12"/>
<dbReference type="OMA" id="ENMPPNA"/>
<dbReference type="Proteomes" id="UP000002428">
    <property type="component" value="Chromosome K"/>
</dbReference>
<dbReference type="GO" id="GO:0031262">
    <property type="term" value="C:Ndc80 complex"/>
    <property type="evidence" value="ECO:0000250"/>
    <property type="project" value="UniProtKB"/>
</dbReference>
<dbReference type="GO" id="GO:0005634">
    <property type="term" value="C:nucleus"/>
    <property type="evidence" value="ECO:0007669"/>
    <property type="project" value="UniProtKB-SubCell"/>
</dbReference>
<dbReference type="GO" id="GO:0008017">
    <property type="term" value="F:microtubule binding"/>
    <property type="evidence" value="ECO:0007669"/>
    <property type="project" value="TreeGrafter"/>
</dbReference>
<dbReference type="GO" id="GO:0051301">
    <property type="term" value="P:cell division"/>
    <property type="evidence" value="ECO:0007669"/>
    <property type="project" value="UniProtKB-KW"/>
</dbReference>
<dbReference type="GO" id="GO:0031134">
    <property type="term" value="P:sister chromatid biorientation"/>
    <property type="evidence" value="ECO:0000250"/>
    <property type="project" value="UniProtKB"/>
</dbReference>
<dbReference type="CDD" id="cd11565">
    <property type="entry name" value="RWD_Spc24"/>
    <property type="match status" value="1"/>
</dbReference>
<dbReference type="Gene3D" id="3.30.160.430">
    <property type="match status" value="1"/>
</dbReference>
<dbReference type="InterPro" id="IPR013252">
    <property type="entry name" value="Ndc80_Spc24"/>
</dbReference>
<dbReference type="InterPro" id="IPR038066">
    <property type="entry name" value="Spc24_Fungi_globular_sf"/>
</dbReference>
<dbReference type="PANTHER" id="PTHR22142">
    <property type="match status" value="1"/>
</dbReference>
<dbReference type="PANTHER" id="PTHR22142:SF2">
    <property type="entry name" value="KINETOCHORE PROTEIN SPC24"/>
    <property type="match status" value="1"/>
</dbReference>
<dbReference type="Pfam" id="PF08286">
    <property type="entry name" value="Spc24"/>
    <property type="match status" value="1"/>
</dbReference>
<dbReference type="SUPFAM" id="SSF143026">
    <property type="entry name" value="Kinetochore globular domain"/>
    <property type="match status" value="1"/>
</dbReference>
<evidence type="ECO:0000250" key="1"/>
<evidence type="ECO:0000250" key="2">
    <source>
        <dbReference type="UniProtKB" id="Q04477"/>
    </source>
</evidence>
<evidence type="ECO:0000255" key="3"/>
<evidence type="ECO:0000305" key="4"/>
<comment type="function">
    <text evidence="1">Acts as a component of the essential kinetochore-associated NDC80 complex, which is required for chromosome segregation and spindle checkpoint activity.</text>
</comment>
<comment type="subunit">
    <text evidence="1">Component of the NDC80 complex, which consists of NDC80, NUF2, SPC24 and SPC25.</text>
</comment>
<comment type="subcellular location">
    <subcellularLocation>
        <location evidence="2">Nucleus</location>
    </subcellularLocation>
    <subcellularLocation>
        <location evidence="2">Chromosome</location>
        <location evidence="2">Centromere</location>
        <location evidence="2">Kinetochore</location>
    </subcellularLocation>
    <text evidence="2">Associated with kinetochores.</text>
</comment>
<comment type="similarity">
    <text evidence="4">Belongs to the SPC24 family.</text>
</comment>
<accession>Q6FN12</accession>
<gene>
    <name type="primary">SPC24</name>
    <name type="ordered locus">CAGL0K03619g</name>
</gene>
<keyword id="KW-0131">Cell cycle</keyword>
<keyword id="KW-0132">Cell division</keyword>
<keyword id="KW-0137">Centromere</keyword>
<keyword id="KW-0158">Chromosome</keyword>
<keyword id="KW-0175">Coiled coil</keyword>
<keyword id="KW-0995">Kinetochore</keyword>
<keyword id="KW-0498">Mitosis</keyword>
<keyword id="KW-0539">Nucleus</keyword>
<keyword id="KW-1185">Reference proteome</keyword>
<organism>
    <name type="scientific">Candida glabrata (strain ATCC 2001 / BCRC 20586 / JCM 3761 / NBRC 0622 / NRRL Y-65 / CBS 138)</name>
    <name type="common">Yeast</name>
    <name type="synonym">Nakaseomyces glabratus</name>
    <dbReference type="NCBI Taxonomy" id="284593"/>
    <lineage>
        <taxon>Eukaryota</taxon>
        <taxon>Fungi</taxon>
        <taxon>Dikarya</taxon>
        <taxon>Ascomycota</taxon>
        <taxon>Saccharomycotina</taxon>
        <taxon>Saccharomycetes</taxon>
        <taxon>Saccharomycetales</taxon>
        <taxon>Saccharomycetaceae</taxon>
        <taxon>Nakaseomyces</taxon>
    </lineage>
</organism>
<feature type="chain" id="PRO_0000246661" description="Probable kinetochore protein SPC24">
    <location>
        <begin position="1"/>
        <end position="201"/>
    </location>
</feature>
<feature type="coiled-coil region" evidence="3">
    <location>
        <begin position="24"/>
        <end position="129"/>
    </location>
</feature>